<keyword id="KW-0002">3D-structure</keyword>
<keyword id="KW-0007">Acetylation</keyword>
<keyword id="KW-0167">Capsid protein</keyword>
<keyword id="KW-1176">Cytoplasmic inwards viral transport</keyword>
<keyword id="KW-1048">Host nucleus</keyword>
<keyword id="KW-0945">Host-virus interaction</keyword>
<keyword id="KW-0426">Late protein</keyword>
<keyword id="KW-1177">Microtubular inwards viral transport</keyword>
<keyword id="KW-0597">Phosphoprotein</keyword>
<keyword id="KW-1185">Reference proteome</keyword>
<keyword id="KW-1148">T=25 icosahedral capsid protein</keyword>
<keyword id="KW-0946">Virion</keyword>
<keyword id="KW-1160">Virus entry into host cell</keyword>
<organismHost>
    <name type="scientific">Homo sapiens</name>
    <name type="common">Human</name>
    <dbReference type="NCBI Taxonomy" id="9606"/>
</organismHost>
<dbReference type="EMBL" id="M73260">
    <property type="status" value="NOT_ANNOTATED_CDS"/>
    <property type="molecule type" value="Genomic_DNA"/>
</dbReference>
<dbReference type="EMBL" id="X02997">
    <property type="protein sequence ID" value="CAA26753.1"/>
    <property type="molecule type" value="Genomic_DNA"/>
</dbReference>
<dbReference type="PIR" id="A03849">
    <property type="entry name" value="HXAD5"/>
</dbReference>
<dbReference type="RefSeq" id="AP_000211.1">
    <property type="nucleotide sequence ID" value="AC_000008.1"/>
</dbReference>
<dbReference type="PDB" id="1P30">
    <property type="method" value="X-ray"/>
    <property type="resolution" value="2.50 A"/>
    <property type="chains" value="A=2-952"/>
</dbReference>
<dbReference type="PDB" id="3TG7">
    <property type="method" value="X-ray"/>
    <property type="resolution" value="1.57 A"/>
    <property type="chains" value="A=2-952"/>
</dbReference>
<dbReference type="PDB" id="4V4U">
    <property type="method" value="EM"/>
    <property type="resolution" value="10.00 A"/>
    <property type="chains" value="F/G/H/I/J/K/L/M/N/O/P/Q=2-952"/>
</dbReference>
<dbReference type="PDB" id="5LDN">
    <property type="method" value="X-ray"/>
    <property type="resolution" value="2.70 A"/>
    <property type="chains" value="A=8-146, A=164-947"/>
</dbReference>
<dbReference type="PDB" id="5OGI">
    <property type="method" value="X-ray"/>
    <property type="resolution" value="2.80 A"/>
    <property type="chains" value="A=1-952"/>
</dbReference>
<dbReference type="PDB" id="6B1T">
    <property type="method" value="EM"/>
    <property type="resolution" value="3.20 A"/>
    <property type="chains" value="A/B/C/D/E/F/G/H/I/J/K/L=1-952"/>
</dbReference>
<dbReference type="PDB" id="6CGV">
    <property type="method" value="X-ray"/>
    <property type="resolution" value="3.80 A"/>
    <property type="chains" value="A/B/C/D/E/F/G/H/I/J/K/L=4-952"/>
</dbReference>
<dbReference type="PDB" id="6EQC">
    <property type="method" value="EM"/>
    <property type="resolution" value="7.40 A"/>
    <property type="chains" value="A/B/C=1-952"/>
</dbReference>
<dbReference type="PDB" id="7S78">
    <property type="method" value="EM"/>
    <property type="resolution" value="3.72 A"/>
    <property type="chains" value="A/B/C/D/E/F/G/H/I/J/K/L=1-952"/>
</dbReference>
<dbReference type="PDB" id="8Q7C">
    <property type="method" value="EM"/>
    <property type="resolution" value="2.90 A"/>
    <property type="chains" value="A/B/C=1-952"/>
</dbReference>
<dbReference type="PDB" id="9CLI">
    <property type="method" value="EM"/>
    <property type="resolution" value="3.61 A"/>
    <property type="chains" value="J/K/L=1-952"/>
</dbReference>
<dbReference type="PDB" id="9CLN">
    <property type="method" value="EM"/>
    <property type="resolution" value="4.13 A"/>
    <property type="chains" value="J/K/L=1-952"/>
</dbReference>
<dbReference type="PDBsum" id="1P30"/>
<dbReference type="PDBsum" id="3TG7"/>
<dbReference type="PDBsum" id="4V4U"/>
<dbReference type="PDBsum" id="5LDN"/>
<dbReference type="PDBsum" id="5OGI"/>
<dbReference type="PDBsum" id="6B1T"/>
<dbReference type="PDBsum" id="6CGV"/>
<dbReference type="PDBsum" id="6EQC"/>
<dbReference type="PDBsum" id="7S78"/>
<dbReference type="PDBsum" id="8Q7C"/>
<dbReference type="PDBsum" id="9CLI"/>
<dbReference type="PDBsum" id="9CLN"/>
<dbReference type="EMDB" id="EMD-18212"/>
<dbReference type="EMDB" id="EMD-24881"/>
<dbReference type="EMDB" id="EMD-45675"/>
<dbReference type="EMDB" id="EMD-45726"/>
<dbReference type="EMDB" id="EMD-7034"/>
<dbReference type="SMR" id="P04133"/>
<dbReference type="IntAct" id="P04133">
    <property type="interactions" value="3"/>
</dbReference>
<dbReference type="ABCD" id="P04133">
    <property type="antibodies" value="2 sequenced antibodies"/>
</dbReference>
<dbReference type="EvolutionaryTrace" id="P04133"/>
<dbReference type="Proteomes" id="UP000004992">
    <property type="component" value="Genome"/>
</dbReference>
<dbReference type="GO" id="GO:0043657">
    <property type="term" value="C:host cell"/>
    <property type="evidence" value="ECO:0007669"/>
    <property type="project" value="GOC"/>
</dbReference>
<dbReference type="GO" id="GO:0042025">
    <property type="term" value="C:host cell nucleus"/>
    <property type="evidence" value="ECO:0007669"/>
    <property type="project" value="UniProtKB-SubCell"/>
</dbReference>
<dbReference type="GO" id="GO:0039623">
    <property type="term" value="C:T=25 icosahedral viral capsid"/>
    <property type="evidence" value="ECO:0007669"/>
    <property type="project" value="UniProtKB-UniRule"/>
</dbReference>
<dbReference type="GO" id="GO:0019028">
    <property type="term" value="C:viral capsid"/>
    <property type="evidence" value="ECO:0000314"/>
    <property type="project" value="CACAO"/>
</dbReference>
<dbReference type="GO" id="GO:0005198">
    <property type="term" value="F:structural molecule activity"/>
    <property type="evidence" value="ECO:0007669"/>
    <property type="project" value="UniProtKB-UniRule"/>
</dbReference>
<dbReference type="GO" id="GO:0075521">
    <property type="term" value="P:microtubule-dependent intracellular transport of viral material towards nucleus"/>
    <property type="evidence" value="ECO:0007669"/>
    <property type="project" value="UniProtKB-UniRule"/>
</dbReference>
<dbReference type="GO" id="GO:0046718">
    <property type="term" value="P:symbiont entry into host cell"/>
    <property type="evidence" value="ECO:0007669"/>
    <property type="project" value="UniProtKB-UniRule"/>
</dbReference>
<dbReference type="FunFam" id="2.70.9.10:FF:000001">
    <property type="entry name" value="Hexon protein"/>
    <property type="match status" value="1"/>
</dbReference>
<dbReference type="Gene3D" id="2.170.9.10">
    <property type="entry name" value="Adenovirus Type 2 Hexon, domain 1"/>
    <property type="match status" value="1"/>
</dbReference>
<dbReference type="Gene3D" id="2.70.9.10">
    <property type="entry name" value="Adenovirus Type 2 Hexon, domain 4"/>
    <property type="match status" value="2"/>
</dbReference>
<dbReference type="Gene3D" id="3.90.39.10">
    <property type="entry name" value="Hexon Major Viral Coat Protein, domain 2"/>
    <property type="match status" value="1"/>
</dbReference>
<dbReference type="HAMAP" id="MF_04051">
    <property type="entry name" value="ADV_CAPSH"/>
    <property type="match status" value="1"/>
</dbReference>
<dbReference type="InterPro" id="IPR016108">
    <property type="entry name" value="Adenovirus_Pll_hexon_C"/>
</dbReference>
<dbReference type="InterPro" id="IPR016107">
    <property type="entry name" value="Adenovirus_Pll_hexon_N"/>
</dbReference>
<dbReference type="InterPro" id="IPR044942">
    <property type="entry name" value="Adenovirus_Pll_hexon_sub2"/>
</dbReference>
<dbReference type="InterPro" id="IPR037542">
    <property type="entry name" value="ADV_hexon"/>
</dbReference>
<dbReference type="InterPro" id="IPR016112">
    <property type="entry name" value="VP_dsDNA_II"/>
</dbReference>
<dbReference type="Pfam" id="PF01065">
    <property type="entry name" value="Adeno_hexon"/>
    <property type="match status" value="1"/>
</dbReference>
<dbReference type="Pfam" id="PF03678">
    <property type="entry name" value="Adeno_hexon_C"/>
    <property type="match status" value="1"/>
</dbReference>
<dbReference type="SUPFAM" id="SSF49749">
    <property type="entry name" value="Group II dsDNA viruses VP"/>
    <property type="match status" value="2"/>
</dbReference>
<accession>P04133</accession>
<gene>
    <name evidence="1" type="primary">L3</name>
</gene>
<reference key="1">
    <citation type="journal article" date="1984" name="J. Biol. Chem.">
        <title>Adenovirus hexon. Sequence comparison of subgroup C serotypes 2 and 5.</title>
        <authorList>
            <person name="Kinloch R."/>
            <person name="MacKay N."/>
            <person name="Mautner V."/>
        </authorList>
    </citation>
    <scope>NUCLEOTIDE SEQUENCE [GENOMIC DNA]</scope>
</reference>
<reference key="2">
    <citation type="journal article" date="1992" name="Virology">
        <title>The sequence of the genome of adenovirus type 5 and its comparison with the genome of adenovirus type 2.</title>
        <authorList>
            <person name="Chroboczek J."/>
            <person name="Bieber F."/>
            <person name="Jacrot B."/>
        </authorList>
    </citation>
    <scope>NUCLEOTIDE SEQUENCE [GENOMIC DNA]</scope>
</reference>
<reference key="3">
    <citation type="journal article" date="2012" name="Nat. Methods">
        <title>De novo derivation of proteomes from transcriptomes for transcript and protein identification.</title>
        <authorList>
            <person name="Evans V.C."/>
            <person name="Barker G."/>
            <person name="Heesom K.J."/>
            <person name="Fan J."/>
            <person name="Bessant C."/>
            <person name="Matthews D.A."/>
        </authorList>
    </citation>
    <scope>NUCLEOTIDE SEQUENCE [MRNA]</scope>
</reference>
<reference key="4">
    <citation type="journal article" date="2003" name="EMBO J.">
        <title>Switch from capsid protein import to adenovirus assembly by cleavage of nuclear transport signals.</title>
        <authorList>
            <person name="Wodrich H."/>
            <person name="Guan T."/>
            <person name="Cingolani G."/>
            <person name="Von Seggern D."/>
            <person name="Nemerow G."/>
            <person name="Gerace L."/>
        </authorList>
    </citation>
    <scope>INTERACTION WITH PRE-PROTEIN VI</scope>
    <source>
        <strain>Ad5 ts147 mutant</strain>
        <strain>Human adenovirus C serotype 5</strain>
    </source>
</reference>
<reference key="5">
    <citation type="journal article" date="2009" name="Cell Host Microbe">
        <title>Adenovirus transport via direct interaction of cytoplasmic dynein with the viral capsid hexon subunit.</title>
        <authorList>
            <person name="Bremner K.H."/>
            <person name="Scherer J."/>
            <person name="Yi J."/>
            <person name="Vershinin M."/>
            <person name="Gross S.P."/>
            <person name="Vallee R.B."/>
        </authorList>
    </citation>
    <scope>INTERACTION WITH HUMAN DYNEINS DYNC1LI1 AND DYNC1I2</scope>
</reference>
<reference key="6">
    <citation type="journal article" date="2015" name="J. Virol.">
        <title>Nuclear import of adenovirus DNA involves direct interaction of hexon with an N-terminal domain of the nucleoporin Nup214.</title>
        <authorList>
            <person name="Cassany A."/>
            <person name="Ragues J."/>
            <person name="Guan T."/>
            <person name="Begu D."/>
            <person name="Wodrich H."/>
            <person name="Kann M."/>
            <person name="Nemerow G.R."/>
            <person name="Gerace L."/>
        </authorList>
    </citation>
    <scope>INTERACTION WITH HUMAN NUP214</scope>
</reference>
<feature type="initiator methionine" description="Removed; by host" evidence="1">
    <location>
        <position position="1"/>
    </location>
</feature>
<feature type="chain" id="PRO_0000221816" description="Hexon protein" evidence="1">
    <location>
        <begin position="2"/>
        <end position="952"/>
    </location>
</feature>
<feature type="region of interest" description="Disordered" evidence="2">
    <location>
        <begin position="149"/>
        <end position="172"/>
    </location>
</feature>
<feature type="compositionally biased region" description="Acidic residues" evidence="2">
    <location>
        <begin position="149"/>
        <end position="161"/>
    </location>
</feature>
<feature type="site" description="Involved in interaction with pre-protein VI" evidence="1">
    <location>
        <position position="777"/>
    </location>
</feature>
<feature type="modified residue" description="N-acetylalanine; by host" evidence="1">
    <location>
        <position position="2"/>
    </location>
</feature>
<feature type="modified residue" description="Phosphoserine; by host" evidence="1">
    <location>
        <position position="175"/>
    </location>
</feature>
<feature type="modified residue" description="Phosphotyrosine; by host" evidence="1">
    <location>
        <position position="940"/>
    </location>
</feature>
<feature type="sequence conflict" description="In Ref. 3; no nucleotide entry." evidence="6" ref="3">
    <original>T</original>
    <variation>A</variation>
    <location>
        <position position="273"/>
    </location>
</feature>
<feature type="sequence conflict" description="In Ref. 3; no nucleotide entry." evidence="6" ref="3">
    <original>R</original>
    <variation>Q</variation>
    <location>
        <position position="930"/>
    </location>
</feature>
<feature type="helix" evidence="8">
    <location>
        <begin position="9"/>
        <end position="12"/>
    </location>
</feature>
<feature type="strand" evidence="8">
    <location>
        <begin position="15"/>
        <end position="17"/>
    </location>
</feature>
<feature type="helix" evidence="8">
    <location>
        <begin position="20"/>
        <end position="23"/>
    </location>
</feature>
<feature type="helix" evidence="8">
    <location>
        <begin position="26"/>
        <end position="35"/>
    </location>
</feature>
<feature type="turn" evidence="8">
    <location>
        <begin position="36"/>
        <end position="38"/>
    </location>
</feature>
<feature type="helix" evidence="8">
    <location>
        <begin position="42"/>
        <end position="44"/>
    </location>
</feature>
<feature type="strand" evidence="8">
    <location>
        <begin position="54"/>
        <end position="57"/>
    </location>
</feature>
<feature type="strand" evidence="8">
    <location>
        <begin position="64"/>
        <end position="68"/>
    </location>
</feature>
<feature type="strand" evidence="8">
    <location>
        <begin position="71"/>
        <end position="75"/>
    </location>
</feature>
<feature type="strand" evidence="8">
    <location>
        <begin position="77"/>
        <end position="88"/>
    </location>
</feature>
<feature type="helix" evidence="8">
    <location>
        <begin position="96"/>
        <end position="98"/>
    </location>
</feature>
<feature type="strand" evidence="8">
    <location>
        <begin position="100"/>
        <end position="108"/>
    </location>
</feature>
<feature type="strand" evidence="8">
    <location>
        <begin position="116"/>
        <end position="118"/>
    </location>
</feature>
<feature type="strand" evidence="10">
    <location>
        <begin position="120"/>
        <end position="122"/>
    </location>
</feature>
<feature type="strand" evidence="8">
    <location>
        <begin position="132"/>
        <end position="135"/>
    </location>
</feature>
<feature type="strand" evidence="8">
    <location>
        <begin position="167"/>
        <end position="169"/>
    </location>
</feature>
<feature type="strand" evidence="8">
    <location>
        <begin position="183"/>
        <end position="187"/>
    </location>
</feature>
<feature type="strand" evidence="7">
    <location>
        <begin position="192"/>
        <end position="195"/>
    </location>
</feature>
<feature type="turn" evidence="8">
    <location>
        <begin position="198"/>
        <end position="200"/>
    </location>
</feature>
<feature type="strand" evidence="8">
    <location>
        <begin position="209"/>
        <end position="212"/>
    </location>
</feature>
<feature type="strand" evidence="8">
    <location>
        <begin position="217"/>
        <end position="224"/>
    </location>
</feature>
<feature type="strand" evidence="10">
    <location>
        <begin position="250"/>
        <end position="252"/>
    </location>
</feature>
<feature type="turn" evidence="9">
    <location>
        <begin position="253"/>
        <end position="256"/>
    </location>
</feature>
<feature type="strand" evidence="10">
    <location>
        <begin position="258"/>
        <end position="260"/>
    </location>
</feature>
<feature type="strand" evidence="8">
    <location>
        <begin position="263"/>
        <end position="267"/>
    </location>
</feature>
<feature type="strand" evidence="9">
    <location>
        <begin position="273"/>
        <end position="275"/>
    </location>
</feature>
<feature type="strand" evidence="8">
    <location>
        <begin position="283"/>
        <end position="289"/>
    </location>
</feature>
<feature type="strand" evidence="8">
    <location>
        <begin position="298"/>
        <end position="302"/>
    </location>
</feature>
<feature type="helix" evidence="8">
    <location>
        <begin position="312"/>
        <end position="316"/>
    </location>
</feature>
<feature type="strand" evidence="8">
    <location>
        <begin position="318"/>
        <end position="321"/>
    </location>
</feature>
<feature type="strand" evidence="8">
    <location>
        <begin position="327"/>
        <end position="329"/>
    </location>
</feature>
<feature type="helix" evidence="8">
    <location>
        <begin position="331"/>
        <end position="333"/>
    </location>
</feature>
<feature type="turn" evidence="9">
    <location>
        <begin position="334"/>
        <end position="336"/>
    </location>
</feature>
<feature type="helix" evidence="8">
    <location>
        <begin position="342"/>
        <end position="344"/>
    </location>
</feature>
<feature type="strand" evidence="8">
    <location>
        <begin position="347"/>
        <end position="350"/>
    </location>
</feature>
<feature type="turn" evidence="7">
    <location>
        <begin position="351"/>
        <end position="353"/>
    </location>
</feature>
<feature type="helix" evidence="8">
    <location>
        <begin position="366"/>
        <end position="377"/>
    </location>
</feature>
<feature type="helix" evidence="8">
    <location>
        <begin position="385"/>
        <end position="387"/>
    </location>
</feature>
<feature type="helix" evidence="8">
    <location>
        <begin position="396"/>
        <end position="399"/>
    </location>
</feature>
<feature type="strand" evidence="8">
    <location>
        <begin position="400"/>
        <end position="402"/>
    </location>
</feature>
<feature type="strand" evidence="9">
    <location>
        <begin position="412"/>
        <end position="414"/>
    </location>
</feature>
<feature type="strand" evidence="8">
    <location>
        <begin position="424"/>
        <end position="426"/>
    </location>
</feature>
<feature type="strand" evidence="9">
    <location>
        <begin position="429"/>
        <end position="431"/>
    </location>
</feature>
<feature type="strand" evidence="9">
    <location>
        <begin position="435"/>
        <end position="437"/>
    </location>
</feature>
<feature type="strand" evidence="9">
    <location>
        <begin position="439"/>
        <end position="441"/>
    </location>
</feature>
<feature type="strand" evidence="8">
    <location>
        <begin position="444"/>
        <end position="446"/>
    </location>
</feature>
<feature type="strand" evidence="8">
    <location>
        <begin position="450"/>
        <end position="452"/>
    </location>
</feature>
<feature type="strand" evidence="9">
    <location>
        <begin position="460"/>
        <end position="462"/>
    </location>
</feature>
<feature type="helix" evidence="8">
    <location>
        <begin position="464"/>
        <end position="476"/>
    </location>
</feature>
<feature type="helix" evidence="8">
    <location>
        <begin position="478"/>
        <end position="480"/>
    </location>
</feature>
<feature type="helix" evidence="8">
    <location>
        <begin position="483"/>
        <end position="485"/>
    </location>
</feature>
<feature type="strand" evidence="11">
    <location>
        <begin position="490"/>
        <end position="492"/>
    </location>
</feature>
<feature type="helix" evidence="8">
    <location>
        <begin position="501"/>
        <end position="506"/>
    </location>
</feature>
<feature type="helix" evidence="8">
    <location>
        <begin position="511"/>
        <end position="514"/>
    </location>
</feature>
<feature type="turn" evidence="8">
    <location>
        <begin position="516"/>
        <end position="521"/>
    </location>
</feature>
<feature type="helix" evidence="8">
    <location>
        <begin position="527"/>
        <end position="530"/>
    </location>
</feature>
<feature type="helix" evidence="8">
    <location>
        <begin position="541"/>
        <end position="550"/>
    </location>
</feature>
<feature type="strand" evidence="8">
    <location>
        <begin position="552"/>
        <end position="563"/>
    </location>
</feature>
<feature type="turn" evidence="8">
    <location>
        <begin position="567"/>
        <end position="571"/>
    </location>
</feature>
<feature type="strand" evidence="8">
    <location>
        <begin position="576"/>
        <end position="586"/>
    </location>
</feature>
<feature type="helix" evidence="8">
    <location>
        <begin position="589"/>
        <end position="592"/>
    </location>
</feature>
<feature type="strand" evidence="8">
    <location>
        <begin position="593"/>
        <end position="597"/>
    </location>
</feature>
<feature type="turn" evidence="8">
    <location>
        <begin position="601"/>
        <end position="605"/>
    </location>
</feature>
<feature type="strand" evidence="8">
    <location>
        <begin position="607"/>
        <end position="618"/>
    </location>
</feature>
<feature type="helix" evidence="8">
    <location>
        <begin position="624"/>
        <end position="634"/>
    </location>
</feature>
<feature type="helix" evidence="8">
    <location>
        <begin position="637"/>
        <end position="639"/>
    </location>
</feature>
<feature type="strand" evidence="8">
    <location>
        <begin position="641"/>
        <end position="644"/>
    </location>
</feature>
<feature type="strand" evidence="8">
    <location>
        <begin position="649"/>
        <end position="656"/>
    </location>
</feature>
<feature type="strand" evidence="8">
    <location>
        <begin position="662"/>
        <end position="670"/>
    </location>
</feature>
<feature type="strand" evidence="8">
    <location>
        <begin position="677"/>
        <end position="684"/>
    </location>
</feature>
<feature type="helix" evidence="8">
    <location>
        <begin position="685"/>
        <end position="687"/>
    </location>
</feature>
<feature type="strand" evidence="7">
    <location>
        <begin position="692"/>
        <end position="694"/>
    </location>
</feature>
<feature type="helix" evidence="8">
    <location>
        <begin position="706"/>
        <end position="709"/>
    </location>
</feature>
<feature type="helix" evidence="8">
    <location>
        <begin position="715"/>
        <end position="717"/>
    </location>
</feature>
<feature type="strand" evidence="8">
    <location>
        <begin position="718"/>
        <end position="725"/>
    </location>
</feature>
<feature type="turn" evidence="8">
    <location>
        <begin position="726"/>
        <end position="728"/>
    </location>
</feature>
<feature type="strand" evidence="8">
    <location>
        <begin position="729"/>
        <end position="732"/>
    </location>
</feature>
<feature type="strand" evidence="8">
    <location>
        <begin position="737"/>
        <end position="739"/>
    </location>
</feature>
<feature type="strand" evidence="8">
    <location>
        <begin position="742"/>
        <end position="744"/>
    </location>
</feature>
<feature type="helix" evidence="8">
    <location>
        <begin position="749"/>
        <end position="754"/>
    </location>
</feature>
<feature type="strand" evidence="8">
    <location>
        <begin position="759"/>
        <end position="762"/>
    </location>
</feature>
<feature type="helix" evidence="8">
    <location>
        <begin position="763"/>
        <end position="774"/>
    </location>
</feature>
<feature type="strand" evidence="8">
    <location>
        <begin position="777"/>
        <end position="779"/>
    </location>
</feature>
<feature type="helix" evidence="8">
    <location>
        <begin position="786"/>
        <end position="788"/>
    </location>
</feature>
<feature type="helix" evidence="8">
    <location>
        <begin position="794"/>
        <end position="797"/>
    </location>
</feature>
<feature type="strand" evidence="8">
    <location>
        <begin position="798"/>
        <end position="806"/>
    </location>
</feature>
<feature type="turn" evidence="8">
    <location>
        <begin position="808"/>
        <end position="810"/>
    </location>
</feature>
<feature type="turn" evidence="8">
    <location>
        <begin position="819"/>
        <end position="821"/>
    </location>
</feature>
<feature type="turn" evidence="8">
    <location>
        <begin position="826"/>
        <end position="828"/>
    </location>
</feature>
<feature type="strand" evidence="8">
    <location>
        <begin position="831"/>
        <end position="835"/>
    </location>
</feature>
<feature type="strand" evidence="8">
    <location>
        <begin position="858"/>
        <end position="866"/>
    </location>
</feature>
<feature type="strand" evidence="8">
    <location>
        <begin position="871"/>
        <end position="876"/>
    </location>
</feature>
<feature type="helix" evidence="8">
    <location>
        <begin position="888"/>
        <end position="890"/>
    </location>
</feature>
<feature type="helix" evidence="8">
    <location>
        <begin position="892"/>
        <end position="896"/>
    </location>
</feature>
<feature type="strand" evidence="8">
    <location>
        <begin position="899"/>
        <end position="907"/>
    </location>
</feature>
<feature type="strand" evidence="8">
    <location>
        <begin position="914"/>
        <end position="921"/>
    </location>
</feature>
<feature type="strand" evidence="8">
    <location>
        <begin position="923"/>
        <end position="929"/>
    </location>
</feature>
<feature type="strand" evidence="8">
    <location>
        <begin position="937"/>
        <end position="945"/>
    </location>
</feature>
<comment type="function">
    <text evidence="1">Major capsid protein that self-associates to form 240 hexon trimers, each in the shape of a hexagon, building most of the pseudo T=25 capsid. Assembled into trimeric units with the help of the chaperone shutoff protein. Transported by pre-protein VI to the nucleus where it associates with other structural proteins to form an empty capsid. Might be involved, through its interaction with host dyneins, in the intracellular microtubule-dependent transport of incoming viral capsid to the nucleus.</text>
</comment>
<comment type="subunit">
    <text evidence="1 3 4 5">Homotrimer. Interacts with the capsid vertex protein; this interaction binds the peripentonal hexons to the neighboring penton base. Interacts with the hexon-linking protein; this interaction tethers the hexons surrounding the penton to those situated in the central plate of the facet. Interacts with the hexon-interlacing protein; this interaction lashes the hexons together. Interacts with host dyneins DYNC1LI1 and DYNC1I2; this interaction might be involved in intracellular microtubule-dependent transport of incoming viral capsid. Interacts with the shutoff protein; this interaction allows folding and formation of hexons trimers. Interacts with pre-protein VI; this interaction probably allows nuclear import of hexon trimers and possibly pre-capsid assembly. Interacts with host NUP214 (via N-terminus); this interaction might be essential for the release of the virus genome to the nucleus (PubMed:25410864).</text>
</comment>
<comment type="subcellular location">
    <subcellularLocation>
        <location evidence="1">Virion</location>
    </subcellularLocation>
    <subcellularLocation>
        <location evidence="1">Host nucleus</location>
    </subcellularLocation>
    <text evidence="1">Forms the capsid icosahedric shell. Present in 720 copies per virion, assembled in 240 trimers.</text>
</comment>
<comment type="induction">
    <text evidence="1">Expressed in the late phase of the viral replicative cycle.</text>
</comment>
<comment type="miscellaneous">
    <text evidence="1">All late proteins expressed from the major late promoter are produced by alternative splicing and alternative polyadenylation of the same gene giving rise to non-overlapping ORFs. A leader sequence is present in the N-terminus of all these mRNAs and is recognized by the viral shutoff protein to provide expression although conventional translation via ribosome scanning from the cap has been shut off in the host cell.</text>
</comment>
<comment type="similarity">
    <text evidence="1 6">Belongs to the adenoviridae hexon protein family.</text>
</comment>
<protein>
    <recommendedName>
        <fullName evidence="1">Hexon protein</fullName>
        <shortName evidence="1">CP-H</shortName>
    </recommendedName>
    <alternativeName>
        <fullName evidence="1">Protein II</fullName>
    </alternativeName>
</protein>
<evidence type="ECO:0000255" key="1">
    <source>
        <dbReference type="HAMAP-Rule" id="MF_04051"/>
    </source>
</evidence>
<evidence type="ECO:0000256" key="2">
    <source>
        <dbReference type="SAM" id="MobiDB-lite"/>
    </source>
</evidence>
<evidence type="ECO:0000269" key="3">
    <source>
    </source>
</evidence>
<evidence type="ECO:0000269" key="4">
    <source>
    </source>
</evidence>
<evidence type="ECO:0000269" key="5">
    <source>
    </source>
</evidence>
<evidence type="ECO:0000305" key="6"/>
<evidence type="ECO:0007829" key="7">
    <source>
        <dbReference type="PDB" id="1P30"/>
    </source>
</evidence>
<evidence type="ECO:0007829" key="8">
    <source>
        <dbReference type="PDB" id="3TG7"/>
    </source>
</evidence>
<evidence type="ECO:0007829" key="9">
    <source>
        <dbReference type="PDB" id="5LDN"/>
    </source>
</evidence>
<evidence type="ECO:0007829" key="10">
    <source>
        <dbReference type="PDB" id="5OGI"/>
    </source>
</evidence>
<evidence type="ECO:0007829" key="11">
    <source>
        <dbReference type="PDB" id="8Q7C"/>
    </source>
</evidence>
<proteinExistence type="evidence at protein level"/>
<organism>
    <name type="scientific">Human adenovirus C serotype 5</name>
    <name type="common">HAdV-5</name>
    <name type="synonym">Human adenovirus 5</name>
    <dbReference type="NCBI Taxonomy" id="28285"/>
    <lineage>
        <taxon>Viruses</taxon>
        <taxon>Varidnaviria</taxon>
        <taxon>Bamfordvirae</taxon>
        <taxon>Preplasmiviricota</taxon>
        <taxon>Tectiliviricetes</taxon>
        <taxon>Rowavirales</taxon>
        <taxon>Adenoviridae</taxon>
        <taxon>Mastadenovirus</taxon>
        <taxon>Human mastadenovirus C</taxon>
    </lineage>
</organism>
<sequence length="952" mass="108007">MATPSMMPQWSYMHISGQDASEYLSPGLVQFARATETYFSLNNKFRNPTVAPTHDVTTDRSQRLTLRFIPVDREDTAYSYKARFTLAVGDNRVLDMASTYFDIRGVLDRGPTFKPYSGTAYNALAPKGAPNPCEWDEAATALEINLEEEDDDNEDEVDEQAEQQKTHVFGQAPYSGINITKEGIQIGVEGQTPKYADKTFQPEPQIGESQWYETEINHAAGRVLKKTTPMKPCYGSYAKPTNENGGQGILVKQQNGKLESQVEMQFFSTTEATAGNGDNLTPKVVLYSEDVDIETPDTHISYMPTIKEGNSRELMGQQSMPNRPNYIAFRDNFIGLMYYNSTGNMGVLAGQASQLNAVVDLQDRNTELSYQLLLDSIGDRTRYFSMWNQAVDSYDPDVRIIENHGTEDELPNYCFPLGGVINTETLTKVKPKTGQENGWEKDATEFSDKNEIRVGNNFAMEINLNANLWRNFLYSNIALYLPDKLKYSPSNVKISDNPNTYDYMNKRVVAPGLVDCYINLGARWSLDYMDNVNPFNHHRNAGLRYRSMLLGNGRYVPFHIQVPQKFFAIKNLLLLPGSYTYEWNFRKDVNMVLQSSLGNDLRVDGASIKFDSICLYATFFPMAHNTASTLEAMLRNDTNDQSFNDYLSAANMLYPIPANATNVPISIPSRNWAAFRGWAFTRLKTKETPSLGSGYDPYYTYSGSIPYLDGTFYLNHTFKKVAITFDSSVSWPGNDRLLTPNEFEIKRSVDGEGYNVAQCNMTKDWFLVQMLANYNIGYQGFYIPESYKDRMYSFFRNFQPMSRQVVDDTKYKDYQQVGILHQHNNSGFVGYLAPTMREGQAYPANFPYPLIGKTAVDSITQKKFLCDRTLWRIPFSSNFMSMGALTDLGQNLLYANSAHALDMTFEVDPMDEPTLLYVLFEVFDVVRVHRPHRGVIETVYLRTPFSAGNATT</sequence>
<name>CAPSH_ADE05</name>